<dbReference type="EC" id="3.6.1.55"/>
<dbReference type="EMBL" id="AF008220">
    <property type="protein sequence ID" value="AAC00239.1"/>
    <property type="molecule type" value="Genomic_DNA"/>
</dbReference>
<dbReference type="EMBL" id="AL009126">
    <property type="protein sequence ID" value="CAB15041.1"/>
    <property type="molecule type" value="Genomic_DNA"/>
</dbReference>
<dbReference type="PIR" id="E69994">
    <property type="entry name" value="E69994"/>
</dbReference>
<dbReference type="RefSeq" id="WP_003229087.1">
    <property type="nucleotide sequence ID" value="NZ_OZ025638.1"/>
</dbReference>
<dbReference type="PDB" id="4JZS">
    <property type="method" value="X-ray"/>
    <property type="resolution" value="2.20 A"/>
    <property type="chains" value="A/D=1-158"/>
</dbReference>
<dbReference type="PDB" id="4JZT">
    <property type="method" value="X-ray"/>
    <property type="resolution" value="2.90 A"/>
    <property type="chains" value="A/D=1-158"/>
</dbReference>
<dbReference type="PDB" id="4JZU">
    <property type="method" value="X-ray"/>
    <property type="resolution" value="1.70 A"/>
    <property type="chains" value="A/B=1-158"/>
</dbReference>
<dbReference type="PDB" id="4JZV">
    <property type="method" value="X-ray"/>
    <property type="resolution" value="2.20 A"/>
    <property type="chains" value="A/B=1-158"/>
</dbReference>
<dbReference type="PDBsum" id="4JZS"/>
<dbReference type="PDBsum" id="4JZT"/>
<dbReference type="PDBsum" id="4JZU"/>
<dbReference type="PDBsum" id="4JZV"/>
<dbReference type="SMR" id="O35013"/>
<dbReference type="FunCoup" id="O35013">
    <property type="interactions" value="4"/>
</dbReference>
<dbReference type="STRING" id="224308.BSU30630"/>
<dbReference type="PaxDb" id="224308-BSU30630"/>
<dbReference type="EnsemblBacteria" id="CAB15041">
    <property type="protein sequence ID" value="CAB15041"/>
    <property type="gene ID" value="BSU_30630"/>
</dbReference>
<dbReference type="GeneID" id="937072"/>
<dbReference type="KEGG" id="bsu:BSU30630"/>
<dbReference type="PATRIC" id="fig|224308.179.peg.3320"/>
<dbReference type="eggNOG" id="COG0494">
    <property type="taxonomic scope" value="Bacteria"/>
</dbReference>
<dbReference type="InParanoid" id="O35013"/>
<dbReference type="OrthoDB" id="9131041at2"/>
<dbReference type="PhylomeDB" id="O35013"/>
<dbReference type="BioCyc" id="BSUB:BSU30630-MONOMER"/>
<dbReference type="BioCyc" id="MetaCyc:BSU30630-MONOMER"/>
<dbReference type="EvolutionaryTrace" id="O35013"/>
<dbReference type="Proteomes" id="UP000001570">
    <property type="component" value="Chromosome"/>
</dbReference>
<dbReference type="GO" id="GO:0005737">
    <property type="term" value="C:cytoplasm"/>
    <property type="evidence" value="ECO:0000318"/>
    <property type="project" value="GO_Central"/>
</dbReference>
<dbReference type="GO" id="GO:0035539">
    <property type="term" value="F:8-oxo-7,8-dihydrodeoxyguanosine triphosphate pyrophosphatase activity"/>
    <property type="evidence" value="ECO:0007669"/>
    <property type="project" value="UniProtKB-EC"/>
</dbReference>
<dbReference type="GO" id="GO:0016818">
    <property type="term" value="F:hydrolase activity, acting on acid anhydrides, in phosphorus-containing anhydrides"/>
    <property type="evidence" value="ECO:0000318"/>
    <property type="project" value="GO_Central"/>
</dbReference>
<dbReference type="GO" id="GO:0046872">
    <property type="term" value="F:metal ion binding"/>
    <property type="evidence" value="ECO:0007669"/>
    <property type="project" value="UniProtKB-KW"/>
</dbReference>
<dbReference type="CDD" id="cd04665">
    <property type="entry name" value="NUDIX_RppH"/>
    <property type="match status" value="1"/>
</dbReference>
<dbReference type="Gene3D" id="3.90.79.10">
    <property type="entry name" value="Nucleoside Triphosphate Pyrophosphohydrolase"/>
    <property type="match status" value="1"/>
</dbReference>
<dbReference type="InterPro" id="IPR020476">
    <property type="entry name" value="Nudix_hydrolase"/>
</dbReference>
<dbReference type="InterPro" id="IPR015797">
    <property type="entry name" value="NUDIX_hydrolase-like_dom_sf"/>
</dbReference>
<dbReference type="InterPro" id="IPR020084">
    <property type="entry name" value="NUDIX_hydrolase_CS"/>
</dbReference>
<dbReference type="InterPro" id="IPR000086">
    <property type="entry name" value="NUDIX_hydrolase_dom"/>
</dbReference>
<dbReference type="InterPro" id="IPR014078">
    <property type="entry name" value="Nudix_YtkD"/>
</dbReference>
<dbReference type="NCBIfam" id="TIGR02705">
    <property type="entry name" value="nudix_YtkD"/>
    <property type="match status" value="1"/>
</dbReference>
<dbReference type="PANTHER" id="PTHR43758">
    <property type="entry name" value="7,8-DIHYDRO-8-OXOGUANINE TRIPHOSPHATASE"/>
    <property type="match status" value="1"/>
</dbReference>
<dbReference type="PANTHER" id="PTHR43758:SF8">
    <property type="entry name" value="8-OXO-DGTP DIPHOSPHATASE YTKD-RELATED"/>
    <property type="match status" value="1"/>
</dbReference>
<dbReference type="Pfam" id="PF00293">
    <property type="entry name" value="NUDIX"/>
    <property type="match status" value="1"/>
</dbReference>
<dbReference type="PRINTS" id="PR00502">
    <property type="entry name" value="NUDIXFAMILY"/>
</dbReference>
<dbReference type="SUPFAM" id="SSF55811">
    <property type="entry name" value="Nudix"/>
    <property type="match status" value="1"/>
</dbReference>
<dbReference type="PROSITE" id="PS51462">
    <property type="entry name" value="NUDIX"/>
    <property type="match status" value="1"/>
</dbReference>
<dbReference type="PROSITE" id="PS00893">
    <property type="entry name" value="NUDIX_BOX"/>
    <property type="match status" value="1"/>
</dbReference>
<feature type="chain" id="PRO_0000057074" description="Putative 8-oxo-dGTP diphosphatase YtkD">
    <location>
        <begin position="1"/>
        <end position="158"/>
    </location>
</feature>
<feature type="domain" description="Nudix hydrolase" evidence="2">
    <location>
        <begin position="6"/>
        <end position="145"/>
    </location>
</feature>
<feature type="short sequence motif" description="Nudix box">
    <location>
        <begin position="53"/>
        <end position="74"/>
    </location>
</feature>
<feature type="binding site" evidence="1">
    <location>
        <position position="68"/>
    </location>
    <ligand>
        <name>Mg(2+)</name>
        <dbReference type="ChEBI" id="CHEBI:18420"/>
    </ligand>
</feature>
<feature type="binding site" evidence="1">
    <location>
        <position position="72"/>
    </location>
    <ligand>
        <name>Mg(2+)</name>
        <dbReference type="ChEBI" id="CHEBI:18420"/>
    </ligand>
</feature>
<feature type="strand" evidence="9">
    <location>
        <begin position="2"/>
        <end position="5"/>
    </location>
</feature>
<feature type="strand" evidence="9">
    <location>
        <begin position="11"/>
        <end position="21"/>
    </location>
</feature>
<feature type="strand" evidence="9">
    <location>
        <begin position="26"/>
        <end position="34"/>
    </location>
</feature>
<feature type="strand" evidence="9">
    <location>
        <begin position="37"/>
        <end position="43"/>
    </location>
</feature>
<feature type="turn" evidence="9">
    <location>
        <begin position="44"/>
        <end position="46"/>
    </location>
</feature>
<feature type="strand" evidence="9">
    <location>
        <begin position="47"/>
        <end position="49"/>
    </location>
</feature>
<feature type="strand" evidence="9">
    <location>
        <begin position="52"/>
        <end position="54"/>
    </location>
</feature>
<feature type="strand" evidence="10">
    <location>
        <begin position="57"/>
        <end position="59"/>
    </location>
</feature>
<feature type="helix" evidence="9">
    <location>
        <begin position="61"/>
        <end position="73"/>
    </location>
</feature>
<feature type="strand" evidence="9">
    <location>
        <begin position="75"/>
        <end position="89"/>
    </location>
</feature>
<feature type="strand" evidence="9">
    <location>
        <begin position="94"/>
        <end position="107"/>
    </location>
</feature>
<feature type="strand" evidence="9">
    <location>
        <begin position="114"/>
        <end position="124"/>
    </location>
</feature>
<feature type="helix" evidence="9">
    <location>
        <begin position="129"/>
        <end position="131"/>
    </location>
</feature>
<feature type="helix" evidence="9">
    <location>
        <begin position="137"/>
        <end position="139"/>
    </location>
</feature>
<feature type="strand" evidence="8">
    <location>
        <begin position="140"/>
        <end position="142"/>
    </location>
</feature>
<feature type="helix" evidence="9">
    <location>
        <begin position="143"/>
        <end position="154"/>
    </location>
</feature>
<keyword id="KW-0002">3D-structure</keyword>
<keyword id="KW-0378">Hydrolase</keyword>
<keyword id="KW-0460">Magnesium</keyword>
<keyword id="KW-0479">Metal-binding</keyword>
<keyword id="KW-1185">Reference proteome</keyword>
<proteinExistence type="evidence at protein level"/>
<protein>
    <recommendedName>
        <fullName>Putative 8-oxo-dGTP diphosphatase YtkD</fullName>
        <shortName>8-oxo-dGTPase</shortName>
        <ecNumber>3.6.1.55</ecNumber>
    </recommendedName>
    <alternativeName>
        <fullName>7,8-dihydro-8-oxoguanine-triphosphatase</fullName>
    </alternativeName>
    <alternativeName>
        <fullName>dGTP pyrophosphohydrolase</fullName>
    </alternativeName>
</protein>
<evidence type="ECO:0000250" key="1"/>
<evidence type="ECO:0000255" key="2">
    <source>
        <dbReference type="PROSITE-ProRule" id="PRU00794"/>
    </source>
</evidence>
<evidence type="ECO:0000269" key="3">
    <source>
    </source>
</evidence>
<evidence type="ECO:0000269" key="4">
    <source>
    </source>
</evidence>
<evidence type="ECO:0000269" key="5">
    <source>
    </source>
</evidence>
<evidence type="ECO:0000269" key="6">
    <source>
    </source>
</evidence>
<evidence type="ECO:0000305" key="7"/>
<evidence type="ECO:0007829" key="8">
    <source>
        <dbReference type="PDB" id="4JZT"/>
    </source>
</evidence>
<evidence type="ECO:0007829" key="9">
    <source>
        <dbReference type="PDB" id="4JZU"/>
    </source>
</evidence>
<evidence type="ECO:0007829" key="10">
    <source>
        <dbReference type="PDB" id="4JZV"/>
    </source>
</evidence>
<organism>
    <name type="scientific">Bacillus subtilis (strain 168)</name>
    <dbReference type="NCBI Taxonomy" id="224308"/>
    <lineage>
        <taxon>Bacteria</taxon>
        <taxon>Bacillati</taxon>
        <taxon>Bacillota</taxon>
        <taxon>Bacilli</taxon>
        <taxon>Bacillales</taxon>
        <taxon>Bacillaceae</taxon>
        <taxon>Bacillus</taxon>
    </lineage>
</organism>
<name>YTKD_BACSU</name>
<comment type="function">
    <text evidence="1 3 4">Involved in the GO system responsible for removing an oxidatively damaged form of guanine (7,8-dihydro-8-oxoguanine, 8-oxo-dGTP) from DNA and the nucleotide pool. 8-oxo-dGTP is inserted opposite dA and dC residues of template DNA with almost equal efficiency thus leading to A.T to G.C transversions (By similarity). Functions, in conjunction with MutT, to protect vegetatively growing cells from DNA-damaging agents such as H(2)O(2) or t-BHP (t-butylhydroperoxide). The 2 proteins do not however protect spores. According to PubMed:15576788, phosphohydrolase that catalyzes the hydrolysis of all common nucleoside triphosphates as well as of the mutagenic analog 8-oxo-dGTP. The high catalytic efficiency on dGTP is in contrast to results from PubMed:14761999. According to PubMed:14761999, catalyzes the hydrolysis of 8-oxo-dGTP with a specific activity 413 times higher than that exhibited against dGTP. Preferentially catalyzes the hydrolysis of 8-oxo-dGTP and 8-oxo-GTP. According to PubMed:15576788, hydrolyzes nucleoside triphosphates in a stepwise fashion through the diphosphate to the monophosphate, releasing two molecules of inorganic orthophosphate.</text>
</comment>
<comment type="catalytic activity">
    <reaction>
        <text>8-oxo-dGTP + H2O = 8-oxo-dGMP + diphosphate + H(+)</text>
        <dbReference type="Rhea" id="RHEA:31575"/>
        <dbReference type="ChEBI" id="CHEBI:15377"/>
        <dbReference type="ChEBI" id="CHEBI:15378"/>
        <dbReference type="ChEBI" id="CHEBI:33019"/>
        <dbReference type="ChEBI" id="CHEBI:63224"/>
        <dbReference type="ChEBI" id="CHEBI:77896"/>
        <dbReference type="EC" id="3.6.1.55"/>
    </reaction>
</comment>
<comment type="cofactor">
    <cofactor>
        <name>Mg(2+)</name>
        <dbReference type="ChEBI" id="CHEBI:18420"/>
    </cofactor>
</comment>
<comment type="activity regulation">
    <text>Not induced by oxidative damage (following treatment with paraquat or hydrogen peroxide). Not induced by mitomycin C. Not induced by sigma-B general stress inducers such as sodium chloride, ethanol or heat.</text>
</comment>
<comment type="biophysicochemical properties">
    <kinetics>
        <KM evidence="4">0.16 mM for dGTP</KM>
        <KM evidence="4">0.43 mM for 8-oxo-dGTP</KM>
        <KM evidence="4">0.89 mM for dATP</KM>
        <Vmax evidence="4">2.4 umol/min/mg enzyme with dGTP as substrate</Vmax>
        <Vmax evidence="4">3.1 umol/min/mg enzyme with 8-oxo-dGTP as substrate</Vmax>
        <Vmax evidence="4">4.7 umol/min/mg enzyme with dATP as substrate</Vmax>
    </kinetics>
    <phDependence>
        <text evidence="4">Optimum pH is 8.5-9.</text>
    </phDependence>
</comment>
<comment type="developmental stage">
    <text>Expressed during both vegetative growth and early stage of sporulation.</text>
</comment>
<comment type="disruption phenotype">
    <text evidence="5 6">Growing cells lacking this gene have a 4-fold increased spontaneous mutation frequency (a mild mutator phenotype), as well as an increased sensitivity to DNA-damaging agents such as H(2)O(2) or t-BHP. These phenotypes are increased in a double ytkD/mutT disruption (PubMed:16513759). They are also seen in stationary phase cells. Triple ytkD/mutM/mutY disrupted strains show increased mutation rates during exponential and stationary phase (PubMed:19011023).</text>
</comment>
<comment type="miscellaneous">
    <text>According to PubMed:14761999, can complement an E.coli mutT mutant. According to PubMed:15576788, cannot complement an E.coli mutT mutant.</text>
</comment>
<comment type="similarity">
    <text evidence="7">Belongs to the Nudix hydrolase family.</text>
</comment>
<accession>O35013</accession>
<accession>Q795N9</accession>
<sequence>MYEFKDYYQNTVQLSFDDQPFSDSPKHVWVICRFGGKWLLTEHEDRGYEFPGGKVEPMECAEEAALREVKEETGARVKSLKYLGQYKVLGKEKVIVKNIYFADIEKLEKQADYFETKGPVLFHELPENLSRNKKFSFIMKDSVLPISLKKLKESGWIE</sequence>
<reference key="1">
    <citation type="journal article" date="1997" name="Microbiology">
        <title>Sequencing and functional annotation of the Bacillus subtilis genes in the 200 kb rrnB-dnaB region.</title>
        <authorList>
            <person name="Lapidus A."/>
            <person name="Galleron N."/>
            <person name="Sorokin A."/>
            <person name="Ehrlich S.D."/>
        </authorList>
    </citation>
    <scope>NUCLEOTIDE SEQUENCE [GENOMIC DNA]</scope>
</reference>
<reference key="2">
    <citation type="journal article" date="1997" name="Nature">
        <title>The complete genome sequence of the Gram-positive bacterium Bacillus subtilis.</title>
        <authorList>
            <person name="Kunst F."/>
            <person name="Ogasawara N."/>
            <person name="Moszer I."/>
            <person name="Albertini A.M."/>
            <person name="Alloni G."/>
            <person name="Azevedo V."/>
            <person name="Bertero M.G."/>
            <person name="Bessieres P."/>
            <person name="Bolotin A."/>
            <person name="Borchert S."/>
            <person name="Borriss R."/>
            <person name="Boursier L."/>
            <person name="Brans A."/>
            <person name="Braun M."/>
            <person name="Brignell S.C."/>
            <person name="Bron S."/>
            <person name="Brouillet S."/>
            <person name="Bruschi C.V."/>
            <person name="Caldwell B."/>
            <person name="Capuano V."/>
            <person name="Carter N.M."/>
            <person name="Choi S.-K."/>
            <person name="Codani J.-J."/>
            <person name="Connerton I.F."/>
            <person name="Cummings N.J."/>
            <person name="Daniel R.A."/>
            <person name="Denizot F."/>
            <person name="Devine K.M."/>
            <person name="Duesterhoeft A."/>
            <person name="Ehrlich S.D."/>
            <person name="Emmerson P.T."/>
            <person name="Entian K.-D."/>
            <person name="Errington J."/>
            <person name="Fabret C."/>
            <person name="Ferrari E."/>
            <person name="Foulger D."/>
            <person name="Fritz C."/>
            <person name="Fujita M."/>
            <person name="Fujita Y."/>
            <person name="Fuma S."/>
            <person name="Galizzi A."/>
            <person name="Galleron N."/>
            <person name="Ghim S.-Y."/>
            <person name="Glaser P."/>
            <person name="Goffeau A."/>
            <person name="Golightly E.J."/>
            <person name="Grandi G."/>
            <person name="Guiseppi G."/>
            <person name="Guy B.J."/>
            <person name="Haga K."/>
            <person name="Haiech J."/>
            <person name="Harwood C.R."/>
            <person name="Henaut A."/>
            <person name="Hilbert H."/>
            <person name="Holsappel S."/>
            <person name="Hosono S."/>
            <person name="Hullo M.-F."/>
            <person name="Itaya M."/>
            <person name="Jones L.-M."/>
            <person name="Joris B."/>
            <person name="Karamata D."/>
            <person name="Kasahara Y."/>
            <person name="Klaerr-Blanchard M."/>
            <person name="Klein C."/>
            <person name="Kobayashi Y."/>
            <person name="Koetter P."/>
            <person name="Koningstein G."/>
            <person name="Krogh S."/>
            <person name="Kumano M."/>
            <person name="Kurita K."/>
            <person name="Lapidus A."/>
            <person name="Lardinois S."/>
            <person name="Lauber J."/>
            <person name="Lazarevic V."/>
            <person name="Lee S.-M."/>
            <person name="Levine A."/>
            <person name="Liu H."/>
            <person name="Masuda S."/>
            <person name="Mauel C."/>
            <person name="Medigue C."/>
            <person name="Medina N."/>
            <person name="Mellado R.P."/>
            <person name="Mizuno M."/>
            <person name="Moestl D."/>
            <person name="Nakai S."/>
            <person name="Noback M."/>
            <person name="Noone D."/>
            <person name="O'Reilly M."/>
            <person name="Ogawa K."/>
            <person name="Ogiwara A."/>
            <person name="Oudega B."/>
            <person name="Park S.-H."/>
            <person name="Parro V."/>
            <person name="Pohl T.M."/>
            <person name="Portetelle D."/>
            <person name="Porwollik S."/>
            <person name="Prescott A.M."/>
            <person name="Presecan E."/>
            <person name="Pujic P."/>
            <person name="Purnelle B."/>
            <person name="Rapoport G."/>
            <person name="Rey M."/>
            <person name="Reynolds S."/>
            <person name="Rieger M."/>
            <person name="Rivolta C."/>
            <person name="Rocha E."/>
            <person name="Roche B."/>
            <person name="Rose M."/>
            <person name="Sadaie Y."/>
            <person name="Sato T."/>
            <person name="Scanlan E."/>
            <person name="Schleich S."/>
            <person name="Schroeter R."/>
            <person name="Scoffone F."/>
            <person name="Sekiguchi J."/>
            <person name="Sekowska A."/>
            <person name="Seror S.J."/>
            <person name="Serror P."/>
            <person name="Shin B.-S."/>
            <person name="Soldo B."/>
            <person name="Sorokin A."/>
            <person name="Tacconi E."/>
            <person name="Takagi T."/>
            <person name="Takahashi H."/>
            <person name="Takemaru K."/>
            <person name="Takeuchi M."/>
            <person name="Tamakoshi A."/>
            <person name="Tanaka T."/>
            <person name="Terpstra P."/>
            <person name="Tognoni A."/>
            <person name="Tosato V."/>
            <person name="Uchiyama S."/>
            <person name="Vandenbol M."/>
            <person name="Vannier F."/>
            <person name="Vassarotti A."/>
            <person name="Viari A."/>
            <person name="Wambutt R."/>
            <person name="Wedler E."/>
            <person name="Wedler H."/>
            <person name="Weitzenegger T."/>
            <person name="Winters P."/>
            <person name="Wipat A."/>
            <person name="Yamamoto H."/>
            <person name="Yamane K."/>
            <person name="Yasumoto K."/>
            <person name="Yata K."/>
            <person name="Yoshida K."/>
            <person name="Yoshikawa H.-F."/>
            <person name="Zumstein E."/>
            <person name="Yoshikawa H."/>
            <person name="Danchin A."/>
        </authorList>
    </citation>
    <scope>NUCLEOTIDE SEQUENCE [LARGE SCALE GENOMIC DNA]</scope>
    <source>
        <strain>168</strain>
    </source>
</reference>
<reference key="3">
    <citation type="journal article" date="2004" name="J. Bacteriol.">
        <title>The ytkD (mutTA) gene of Bacillus subtilis encodes a functional antimutator 8-Oxo-(dGTP/GTP)ase and is under dual control of sigma A and sigma F RNA polymerases.</title>
        <authorList>
            <person name="Ramirez M.I."/>
            <person name="Castellanos-Juarez F.X."/>
            <person name="Yasbin R.E."/>
            <person name="Pedraza-Reyes M."/>
        </authorList>
    </citation>
    <scope>FUNCTION</scope>
    <scope>REGULATION</scope>
    <scope>EXPRESSION</scope>
</reference>
<reference key="4">
    <citation type="journal article" date="2004" name="J. Bacteriol.">
        <title>Gene ytkD of Bacillus subtilis encodes an atypical nucleoside triphosphatase member of the Nudix hydrolase superfamily.</title>
        <authorList>
            <person name="Xu W."/>
            <person name="Jones C.R."/>
            <person name="Dunn C.A."/>
            <person name="Bessman M.J."/>
        </authorList>
    </citation>
    <scope>FUNCTION</scope>
    <scope>BIOPHYSICOCHEMICAL PROPERTIES</scope>
</reference>
<reference key="5">
    <citation type="journal article" date="2006" name="J. Bacteriol.">
        <title>YtkD and MutT protect vegetative cells but not spores of Bacillus subtilis from oxidative stress.</title>
        <authorList>
            <person name="Castellanos-Juarez F.X."/>
            <person name="Alvarez-Alvarez C."/>
            <person name="Yasbin R.E."/>
            <person name="Setlow B."/>
            <person name="Setlow P."/>
            <person name="Pedraza-Reyes M."/>
        </authorList>
    </citation>
    <scope>DISRUPTION PHENOTYPE IN GROWING CELLS</scope>
    <source>
        <strain>168 / PS832</strain>
    </source>
</reference>
<reference key="6">
    <citation type="journal article" date="2009" name="J. Bacteriol.">
        <title>Defects in the error prevention oxidized guanine system potentiate stationary-phase mutagenesis in Bacillus subtilis.</title>
        <authorList>
            <person name="Vidales L.E."/>
            <person name="Cardenas L.C."/>
            <person name="Robleto E."/>
            <person name="Yasbin R.E."/>
            <person name="Pedraza-Reyes M."/>
        </authorList>
    </citation>
    <scope>DISRUPTION PHENOTYPE IN STATIONARY PHASE CELLS</scope>
    <source>
        <strain>168 / YB955</strain>
    </source>
</reference>
<gene>
    <name type="primary">ytkD</name>
    <name type="synonym">mutTA</name>
    <name type="ordered locus">BSU30630</name>
</gene>